<accession>A1JMD0</accession>
<dbReference type="EMBL" id="AM286415">
    <property type="protein sequence ID" value="CAL11598.1"/>
    <property type="molecule type" value="Genomic_DNA"/>
</dbReference>
<dbReference type="RefSeq" id="WP_002211347.1">
    <property type="nucleotide sequence ID" value="NC_008800.1"/>
</dbReference>
<dbReference type="RefSeq" id="YP_001005815.1">
    <property type="nucleotide sequence ID" value="NC_008800.1"/>
</dbReference>
<dbReference type="SMR" id="A1JMD0"/>
<dbReference type="GeneID" id="98387575"/>
<dbReference type="KEGG" id="yen:YE1519"/>
<dbReference type="PATRIC" id="fig|393305.7.peg.1644"/>
<dbReference type="eggNOG" id="COG0361">
    <property type="taxonomic scope" value="Bacteria"/>
</dbReference>
<dbReference type="HOGENOM" id="CLU_151267_1_0_6"/>
<dbReference type="OrthoDB" id="9803250at2"/>
<dbReference type="PRO" id="PR:A1JMD0"/>
<dbReference type="Proteomes" id="UP000000642">
    <property type="component" value="Chromosome"/>
</dbReference>
<dbReference type="GO" id="GO:0005829">
    <property type="term" value="C:cytosol"/>
    <property type="evidence" value="ECO:0007669"/>
    <property type="project" value="TreeGrafter"/>
</dbReference>
<dbReference type="GO" id="GO:0043022">
    <property type="term" value="F:ribosome binding"/>
    <property type="evidence" value="ECO:0007669"/>
    <property type="project" value="UniProtKB-UniRule"/>
</dbReference>
<dbReference type="GO" id="GO:0019843">
    <property type="term" value="F:rRNA binding"/>
    <property type="evidence" value="ECO:0007669"/>
    <property type="project" value="UniProtKB-UniRule"/>
</dbReference>
<dbReference type="GO" id="GO:0003743">
    <property type="term" value="F:translation initiation factor activity"/>
    <property type="evidence" value="ECO:0007669"/>
    <property type="project" value="UniProtKB-UniRule"/>
</dbReference>
<dbReference type="CDD" id="cd04451">
    <property type="entry name" value="S1_IF1"/>
    <property type="match status" value="1"/>
</dbReference>
<dbReference type="FunFam" id="2.40.50.140:FF:000002">
    <property type="entry name" value="Translation initiation factor IF-1"/>
    <property type="match status" value="1"/>
</dbReference>
<dbReference type="Gene3D" id="2.40.50.140">
    <property type="entry name" value="Nucleic acid-binding proteins"/>
    <property type="match status" value="1"/>
</dbReference>
<dbReference type="HAMAP" id="MF_00075">
    <property type="entry name" value="IF_1"/>
    <property type="match status" value="1"/>
</dbReference>
<dbReference type="InterPro" id="IPR012340">
    <property type="entry name" value="NA-bd_OB-fold"/>
</dbReference>
<dbReference type="InterPro" id="IPR006196">
    <property type="entry name" value="RNA-binding_domain_S1_IF1"/>
</dbReference>
<dbReference type="InterPro" id="IPR003029">
    <property type="entry name" value="S1_domain"/>
</dbReference>
<dbReference type="InterPro" id="IPR004368">
    <property type="entry name" value="TIF_IF1"/>
</dbReference>
<dbReference type="NCBIfam" id="TIGR00008">
    <property type="entry name" value="infA"/>
    <property type="match status" value="1"/>
</dbReference>
<dbReference type="PANTHER" id="PTHR33370">
    <property type="entry name" value="TRANSLATION INITIATION FACTOR IF-1, CHLOROPLASTIC"/>
    <property type="match status" value="1"/>
</dbReference>
<dbReference type="PANTHER" id="PTHR33370:SF1">
    <property type="entry name" value="TRANSLATION INITIATION FACTOR IF-1, CHLOROPLASTIC"/>
    <property type="match status" value="1"/>
</dbReference>
<dbReference type="Pfam" id="PF01176">
    <property type="entry name" value="eIF-1a"/>
    <property type="match status" value="1"/>
</dbReference>
<dbReference type="SMART" id="SM00316">
    <property type="entry name" value="S1"/>
    <property type="match status" value="1"/>
</dbReference>
<dbReference type="SUPFAM" id="SSF50249">
    <property type="entry name" value="Nucleic acid-binding proteins"/>
    <property type="match status" value="1"/>
</dbReference>
<dbReference type="PROSITE" id="PS50832">
    <property type="entry name" value="S1_IF1_TYPE"/>
    <property type="match status" value="1"/>
</dbReference>
<comment type="function">
    <text evidence="1">One of the essential components for the initiation of protein synthesis. Stabilizes the binding of IF-2 and IF-3 on the 30S subunit to which N-formylmethionyl-tRNA(fMet) subsequently binds. Helps modulate mRNA selection, yielding the 30S pre-initiation complex (PIC). Upon addition of the 50S ribosomal subunit IF-1, IF-2 and IF-3 are released leaving the mature 70S translation initiation complex.</text>
</comment>
<comment type="subunit">
    <text evidence="1">Component of the 30S ribosomal translation pre-initiation complex which assembles on the 30S ribosome in the order IF-2 and IF-3, IF-1 and N-formylmethionyl-tRNA(fMet); mRNA recruitment can occur at any time during PIC assembly.</text>
</comment>
<comment type="subcellular location">
    <subcellularLocation>
        <location evidence="1">Cytoplasm</location>
    </subcellularLocation>
</comment>
<comment type="similarity">
    <text evidence="1">Belongs to the IF-1 family.</text>
</comment>
<reference key="1">
    <citation type="journal article" date="2006" name="PLoS Genet.">
        <title>The complete genome sequence and comparative genome analysis of the high pathogenicity Yersinia enterocolitica strain 8081.</title>
        <authorList>
            <person name="Thomson N.R."/>
            <person name="Howard S."/>
            <person name="Wren B.W."/>
            <person name="Holden M.T.G."/>
            <person name="Crossman L."/>
            <person name="Challis G.L."/>
            <person name="Churcher C."/>
            <person name="Mungall K."/>
            <person name="Brooks K."/>
            <person name="Chillingworth T."/>
            <person name="Feltwell T."/>
            <person name="Abdellah Z."/>
            <person name="Hauser H."/>
            <person name="Jagels K."/>
            <person name="Maddison M."/>
            <person name="Moule S."/>
            <person name="Sanders M."/>
            <person name="Whitehead S."/>
            <person name="Quail M.A."/>
            <person name="Dougan G."/>
            <person name="Parkhill J."/>
            <person name="Prentice M.B."/>
        </authorList>
    </citation>
    <scope>NUCLEOTIDE SEQUENCE [LARGE SCALE GENOMIC DNA]</scope>
    <source>
        <strain>NCTC 13174 / 8081</strain>
    </source>
</reference>
<gene>
    <name evidence="1" type="primary">infA</name>
    <name type="ordered locus">YE1519</name>
</gene>
<feature type="chain" id="PRO_0000338951" description="Translation initiation factor IF-1">
    <location>
        <begin position="1"/>
        <end position="72"/>
    </location>
</feature>
<feature type="domain" description="S1-like" evidence="1">
    <location>
        <begin position="1"/>
        <end position="72"/>
    </location>
</feature>
<keyword id="KW-0963">Cytoplasm</keyword>
<keyword id="KW-0396">Initiation factor</keyword>
<keyword id="KW-0648">Protein biosynthesis</keyword>
<keyword id="KW-0694">RNA-binding</keyword>
<keyword id="KW-0699">rRNA-binding</keyword>
<protein>
    <recommendedName>
        <fullName evidence="1">Translation initiation factor IF-1</fullName>
    </recommendedName>
</protein>
<name>IF1_YERE8</name>
<proteinExistence type="inferred from homology"/>
<sequence length="72" mass="8236">MAKEDNIEMQGTVLDTLPNTMFRVELENGHVVTAHISGKMRKNYIRILTGDKVTVELTPYDLSKGRIVFRSR</sequence>
<evidence type="ECO:0000255" key="1">
    <source>
        <dbReference type="HAMAP-Rule" id="MF_00075"/>
    </source>
</evidence>
<organism>
    <name type="scientific">Yersinia enterocolitica serotype O:8 / biotype 1B (strain NCTC 13174 / 8081)</name>
    <dbReference type="NCBI Taxonomy" id="393305"/>
    <lineage>
        <taxon>Bacteria</taxon>
        <taxon>Pseudomonadati</taxon>
        <taxon>Pseudomonadota</taxon>
        <taxon>Gammaproteobacteria</taxon>
        <taxon>Enterobacterales</taxon>
        <taxon>Yersiniaceae</taxon>
        <taxon>Yersinia</taxon>
    </lineage>
</organism>